<sequence length="125" mass="14230">MARLAGVDIPNEKRIEIALTYIFGVGRTRAKETLAATGISPDIRVKDLTDEQLITLRDYLEANYKIEGDLRREVDADIRRKIQINCYQGQRHRKGLPVRGQRTKTNARTRKGPKRTVAGKKKATK</sequence>
<organism>
    <name type="scientific">Bifidobacterium longum (strain NCC 2705)</name>
    <dbReference type="NCBI Taxonomy" id="206672"/>
    <lineage>
        <taxon>Bacteria</taxon>
        <taxon>Bacillati</taxon>
        <taxon>Actinomycetota</taxon>
        <taxon>Actinomycetes</taxon>
        <taxon>Bifidobacteriales</taxon>
        <taxon>Bifidobacteriaceae</taxon>
        <taxon>Bifidobacterium</taxon>
    </lineage>
</organism>
<reference key="1">
    <citation type="journal article" date="2002" name="Proc. Natl. Acad. Sci. U.S.A.">
        <title>The genome sequence of Bifidobacterium longum reflects its adaptation to the human gastrointestinal tract.</title>
        <authorList>
            <person name="Schell M.A."/>
            <person name="Karmirantzou M."/>
            <person name="Snel B."/>
            <person name="Vilanova D."/>
            <person name="Berger B."/>
            <person name="Pessi G."/>
            <person name="Zwahlen M.-C."/>
            <person name="Desiere F."/>
            <person name="Bork P."/>
            <person name="Delley M."/>
            <person name="Pridmore R.D."/>
            <person name="Arigoni F."/>
        </authorList>
    </citation>
    <scope>NUCLEOTIDE SEQUENCE [LARGE SCALE GENOMIC DNA]</scope>
    <source>
        <strain>NCC 2705</strain>
    </source>
</reference>
<gene>
    <name evidence="1" type="primary">rpsM</name>
    <name type="ordered locus">BL1604</name>
</gene>
<name>RS13_BIFLO</name>
<accession>Q8G3Z5</accession>
<comment type="function">
    <text evidence="1">Located at the top of the head of the 30S subunit, it contacts several helices of the 16S rRNA. In the 70S ribosome it contacts the 23S rRNA (bridge B1a) and protein L5 of the 50S subunit (bridge B1b), connecting the 2 subunits; these bridges are implicated in subunit movement. Contacts the tRNAs in the A and P-sites.</text>
</comment>
<comment type="subunit">
    <text evidence="1">Part of the 30S ribosomal subunit. Forms a loose heterodimer with protein S19. Forms two bridges to the 50S subunit in the 70S ribosome.</text>
</comment>
<comment type="similarity">
    <text evidence="1">Belongs to the universal ribosomal protein uS13 family.</text>
</comment>
<evidence type="ECO:0000255" key="1">
    <source>
        <dbReference type="HAMAP-Rule" id="MF_01315"/>
    </source>
</evidence>
<evidence type="ECO:0000256" key="2">
    <source>
        <dbReference type="SAM" id="MobiDB-lite"/>
    </source>
</evidence>
<evidence type="ECO:0000305" key="3"/>
<keyword id="KW-1185">Reference proteome</keyword>
<keyword id="KW-0687">Ribonucleoprotein</keyword>
<keyword id="KW-0689">Ribosomal protein</keyword>
<keyword id="KW-0694">RNA-binding</keyword>
<keyword id="KW-0699">rRNA-binding</keyword>
<keyword id="KW-0820">tRNA-binding</keyword>
<feature type="chain" id="PRO_0000132067" description="Small ribosomal subunit protein uS13">
    <location>
        <begin position="1"/>
        <end position="125"/>
    </location>
</feature>
<feature type="region of interest" description="Disordered" evidence="2">
    <location>
        <begin position="90"/>
        <end position="125"/>
    </location>
</feature>
<proteinExistence type="inferred from homology"/>
<dbReference type="EMBL" id="AE014295">
    <property type="protein sequence ID" value="AAN25393.1"/>
    <property type="molecule type" value="Genomic_DNA"/>
</dbReference>
<dbReference type="RefSeq" id="NP_696757.1">
    <property type="nucleotide sequence ID" value="NC_004307.2"/>
</dbReference>
<dbReference type="RefSeq" id="WP_007053047.1">
    <property type="nucleotide sequence ID" value="NC_004307.2"/>
</dbReference>
<dbReference type="SMR" id="Q8G3Z5"/>
<dbReference type="STRING" id="206672.BL1604"/>
<dbReference type="EnsemblBacteria" id="AAN25393">
    <property type="protein sequence ID" value="AAN25393"/>
    <property type="gene ID" value="BL1604"/>
</dbReference>
<dbReference type="GeneID" id="69578873"/>
<dbReference type="KEGG" id="blo:BL1604"/>
<dbReference type="PATRIC" id="fig|206672.9.peg.1659"/>
<dbReference type="HOGENOM" id="CLU_103849_1_2_11"/>
<dbReference type="OrthoDB" id="9803610at2"/>
<dbReference type="PhylomeDB" id="Q8G3Z5"/>
<dbReference type="Proteomes" id="UP000000439">
    <property type="component" value="Chromosome"/>
</dbReference>
<dbReference type="GO" id="GO:0005829">
    <property type="term" value="C:cytosol"/>
    <property type="evidence" value="ECO:0007669"/>
    <property type="project" value="TreeGrafter"/>
</dbReference>
<dbReference type="GO" id="GO:0015935">
    <property type="term" value="C:small ribosomal subunit"/>
    <property type="evidence" value="ECO:0007669"/>
    <property type="project" value="TreeGrafter"/>
</dbReference>
<dbReference type="GO" id="GO:0019843">
    <property type="term" value="F:rRNA binding"/>
    <property type="evidence" value="ECO:0007669"/>
    <property type="project" value="UniProtKB-UniRule"/>
</dbReference>
<dbReference type="GO" id="GO:0003735">
    <property type="term" value="F:structural constituent of ribosome"/>
    <property type="evidence" value="ECO:0007669"/>
    <property type="project" value="InterPro"/>
</dbReference>
<dbReference type="GO" id="GO:0000049">
    <property type="term" value="F:tRNA binding"/>
    <property type="evidence" value="ECO:0007669"/>
    <property type="project" value="UniProtKB-UniRule"/>
</dbReference>
<dbReference type="GO" id="GO:0006412">
    <property type="term" value="P:translation"/>
    <property type="evidence" value="ECO:0007669"/>
    <property type="project" value="UniProtKB-UniRule"/>
</dbReference>
<dbReference type="FunFam" id="1.10.8.50:FF:000001">
    <property type="entry name" value="30S ribosomal protein S13"/>
    <property type="match status" value="1"/>
</dbReference>
<dbReference type="FunFam" id="4.10.910.10:FF:000001">
    <property type="entry name" value="30S ribosomal protein S13"/>
    <property type="match status" value="1"/>
</dbReference>
<dbReference type="Gene3D" id="1.10.8.50">
    <property type="match status" value="1"/>
</dbReference>
<dbReference type="Gene3D" id="4.10.910.10">
    <property type="entry name" value="30s ribosomal protein s13, domain 2"/>
    <property type="match status" value="1"/>
</dbReference>
<dbReference type="HAMAP" id="MF_01315">
    <property type="entry name" value="Ribosomal_uS13"/>
    <property type="match status" value="1"/>
</dbReference>
<dbReference type="InterPro" id="IPR027437">
    <property type="entry name" value="Rbsml_uS13_C"/>
</dbReference>
<dbReference type="InterPro" id="IPR001892">
    <property type="entry name" value="Ribosomal_uS13"/>
</dbReference>
<dbReference type="InterPro" id="IPR010979">
    <property type="entry name" value="Ribosomal_uS13-like_H2TH"/>
</dbReference>
<dbReference type="InterPro" id="IPR019980">
    <property type="entry name" value="Ribosomal_uS13_bac-type"/>
</dbReference>
<dbReference type="InterPro" id="IPR018269">
    <property type="entry name" value="Ribosomal_uS13_CS"/>
</dbReference>
<dbReference type="NCBIfam" id="TIGR03631">
    <property type="entry name" value="uS13_bact"/>
    <property type="match status" value="1"/>
</dbReference>
<dbReference type="PANTHER" id="PTHR10871">
    <property type="entry name" value="30S RIBOSOMAL PROTEIN S13/40S RIBOSOMAL PROTEIN S18"/>
    <property type="match status" value="1"/>
</dbReference>
<dbReference type="PANTHER" id="PTHR10871:SF1">
    <property type="entry name" value="SMALL RIBOSOMAL SUBUNIT PROTEIN US13M"/>
    <property type="match status" value="1"/>
</dbReference>
<dbReference type="Pfam" id="PF00416">
    <property type="entry name" value="Ribosomal_S13"/>
    <property type="match status" value="1"/>
</dbReference>
<dbReference type="PIRSF" id="PIRSF002134">
    <property type="entry name" value="Ribosomal_S13"/>
    <property type="match status" value="1"/>
</dbReference>
<dbReference type="SUPFAM" id="SSF46946">
    <property type="entry name" value="S13-like H2TH domain"/>
    <property type="match status" value="1"/>
</dbReference>
<dbReference type="PROSITE" id="PS00646">
    <property type="entry name" value="RIBOSOMAL_S13_1"/>
    <property type="match status" value="1"/>
</dbReference>
<dbReference type="PROSITE" id="PS50159">
    <property type="entry name" value="RIBOSOMAL_S13_2"/>
    <property type="match status" value="1"/>
</dbReference>
<protein>
    <recommendedName>
        <fullName evidence="1">Small ribosomal subunit protein uS13</fullName>
    </recommendedName>
    <alternativeName>
        <fullName evidence="3">30S ribosomal protein S13</fullName>
    </alternativeName>
</protein>